<comment type="catalytic activity">
    <reaction>
        <text>1-(2-carboxyphenylamino)-1-deoxy-D-ribulose 5-phosphate + H(+) = (1S,2R)-1-C-(indol-3-yl)glycerol 3-phosphate + CO2 + H2O</text>
        <dbReference type="Rhea" id="RHEA:23476"/>
        <dbReference type="ChEBI" id="CHEBI:15377"/>
        <dbReference type="ChEBI" id="CHEBI:15378"/>
        <dbReference type="ChEBI" id="CHEBI:16526"/>
        <dbReference type="ChEBI" id="CHEBI:58613"/>
        <dbReference type="ChEBI" id="CHEBI:58866"/>
        <dbReference type="EC" id="4.1.1.48"/>
    </reaction>
</comment>
<comment type="pathway">
    <text>Amino-acid biosynthesis; L-tryptophan biosynthesis; L-tryptophan from chorismate: step 4/5.</text>
</comment>
<comment type="similarity">
    <text evidence="1">Belongs to the TrpC family.</text>
</comment>
<dbReference type="EC" id="4.1.1.48"/>
<dbReference type="EMBL" id="M97640">
    <property type="protein sequence ID" value="AAA26181.1"/>
    <property type="molecule type" value="Genomic_DNA"/>
</dbReference>
<dbReference type="EMBL" id="CP001312">
    <property type="protein sequence ID" value="ADE86089.1"/>
    <property type="molecule type" value="Genomic_DNA"/>
</dbReference>
<dbReference type="PIR" id="A42948">
    <property type="entry name" value="A42948"/>
</dbReference>
<dbReference type="RefSeq" id="WP_013068068.1">
    <property type="nucleotide sequence ID" value="NC_014034.1"/>
</dbReference>
<dbReference type="SMR" id="Q02584"/>
<dbReference type="STRING" id="272942.RCAP_rcc02359"/>
<dbReference type="GeneID" id="31491192"/>
<dbReference type="KEGG" id="rcp:RCAP_rcc02359"/>
<dbReference type="eggNOG" id="COG0134">
    <property type="taxonomic scope" value="Bacteria"/>
</dbReference>
<dbReference type="HOGENOM" id="CLU_034247_2_0_5"/>
<dbReference type="OrthoDB" id="9804217at2"/>
<dbReference type="UniPathway" id="UPA00035">
    <property type="reaction ID" value="UER00043"/>
</dbReference>
<dbReference type="Proteomes" id="UP000002361">
    <property type="component" value="Chromosome"/>
</dbReference>
<dbReference type="GO" id="GO:0004425">
    <property type="term" value="F:indole-3-glycerol-phosphate synthase activity"/>
    <property type="evidence" value="ECO:0007669"/>
    <property type="project" value="UniProtKB-UniRule"/>
</dbReference>
<dbReference type="GO" id="GO:0004640">
    <property type="term" value="F:phosphoribosylanthranilate isomerase activity"/>
    <property type="evidence" value="ECO:0007669"/>
    <property type="project" value="TreeGrafter"/>
</dbReference>
<dbReference type="GO" id="GO:0000162">
    <property type="term" value="P:L-tryptophan biosynthetic process"/>
    <property type="evidence" value="ECO:0007669"/>
    <property type="project" value="UniProtKB-UniRule"/>
</dbReference>
<dbReference type="CDD" id="cd00331">
    <property type="entry name" value="IGPS"/>
    <property type="match status" value="1"/>
</dbReference>
<dbReference type="FunFam" id="3.20.20.70:FF:000024">
    <property type="entry name" value="Indole-3-glycerol phosphate synthase"/>
    <property type="match status" value="1"/>
</dbReference>
<dbReference type="Gene3D" id="3.20.20.70">
    <property type="entry name" value="Aldolase class I"/>
    <property type="match status" value="1"/>
</dbReference>
<dbReference type="HAMAP" id="MF_00134_B">
    <property type="entry name" value="IGPS_B"/>
    <property type="match status" value="1"/>
</dbReference>
<dbReference type="InterPro" id="IPR013785">
    <property type="entry name" value="Aldolase_TIM"/>
</dbReference>
<dbReference type="InterPro" id="IPR045186">
    <property type="entry name" value="Indole-3-glycerol_P_synth"/>
</dbReference>
<dbReference type="InterPro" id="IPR013798">
    <property type="entry name" value="Indole-3-glycerol_P_synth_dom"/>
</dbReference>
<dbReference type="InterPro" id="IPR001468">
    <property type="entry name" value="Indole-3-GlycerolPSynthase_CS"/>
</dbReference>
<dbReference type="InterPro" id="IPR011060">
    <property type="entry name" value="RibuloseP-bd_barrel"/>
</dbReference>
<dbReference type="NCBIfam" id="NF001370">
    <property type="entry name" value="PRK00278.1-2"/>
    <property type="match status" value="1"/>
</dbReference>
<dbReference type="NCBIfam" id="NF001373">
    <property type="entry name" value="PRK00278.1-6"/>
    <property type="match status" value="1"/>
</dbReference>
<dbReference type="NCBIfam" id="NF001377">
    <property type="entry name" value="PRK00278.2-4"/>
    <property type="match status" value="1"/>
</dbReference>
<dbReference type="PANTHER" id="PTHR22854:SF2">
    <property type="entry name" value="INDOLE-3-GLYCEROL-PHOSPHATE SYNTHASE"/>
    <property type="match status" value="1"/>
</dbReference>
<dbReference type="PANTHER" id="PTHR22854">
    <property type="entry name" value="TRYPTOPHAN BIOSYNTHESIS PROTEIN"/>
    <property type="match status" value="1"/>
</dbReference>
<dbReference type="Pfam" id="PF00218">
    <property type="entry name" value="IGPS"/>
    <property type="match status" value="1"/>
</dbReference>
<dbReference type="SUPFAM" id="SSF51366">
    <property type="entry name" value="Ribulose-phoshate binding barrel"/>
    <property type="match status" value="1"/>
</dbReference>
<dbReference type="PROSITE" id="PS00614">
    <property type="entry name" value="IGPS"/>
    <property type="match status" value="1"/>
</dbReference>
<sequence length="264" mass="28266">MTNILDRIKAYKLEEVAAAKARVSFADLEAQARAQAPCRGFAEALRKKSAQGYGLIAEIKKASPSKGLIRPDFDPPALARAYEDGGAACLSVLTDTPSFQGAPDYLIAARNACALPALRKDFLYDPYQVAEARAWGADCILIIMASVEDALAVELEAAATGWGMDVLIEVHDGAELDRALKWLKSPLLGVNNRNLKTFEVTLDVTRQLAPVILAEGRELVCESGIFTPADMAAMAAVGARRFLIGESLMRQADVAAATRALLAC</sequence>
<proteinExistence type="inferred from homology"/>
<evidence type="ECO:0000305" key="1"/>
<accession>Q02584</accession>
<accession>D5ALM8</accession>
<reference key="1">
    <citation type="journal article" date="1992" name="J. Bacteriol.">
        <title>Sequence of the indoleglycerol phosphate synthase (trpC) gene from Rhodobacter capsulatus.</title>
        <authorList>
            <person name="Becker-Rudzik M.A."/>
            <person name="Young D.A."/>
            <person name="Marrs B.L."/>
        </authorList>
    </citation>
    <scope>NUCLEOTIDE SEQUENCE [GENOMIC DNA]</scope>
    <source>
        <strain>ATCC BAA-309 / NBRC 16581 / SB1003</strain>
    </source>
</reference>
<reference key="2">
    <citation type="journal article" date="2010" name="J. Bacteriol.">
        <title>Complete genome sequence of the photosynthetic purple nonsulfur bacterium Rhodobacter capsulatus SB 1003.</title>
        <authorList>
            <person name="Strnad H."/>
            <person name="Lapidus A."/>
            <person name="Paces J."/>
            <person name="Ulbrich P."/>
            <person name="Vlcek C."/>
            <person name="Paces V."/>
            <person name="Haselkorn R."/>
        </authorList>
    </citation>
    <scope>NUCLEOTIDE SEQUENCE [LARGE SCALE GENOMIC DNA]</scope>
    <source>
        <strain>ATCC BAA-309 / NBRC 16581 / SB1003</strain>
    </source>
</reference>
<feature type="chain" id="PRO_0000154247" description="Indole-3-glycerol phosphate synthase">
    <location>
        <begin position="1"/>
        <end position="264"/>
    </location>
</feature>
<feature type="sequence conflict" description="In Ref. 1; AAA26181." evidence="1" ref="1">
    <original>AE</original>
    <variation>GQ</variation>
    <location>
        <begin position="42"/>
        <end position="43"/>
    </location>
</feature>
<feature type="sequence conflict" description="In Ref. 1; AAA26181." evidence="1" ref="1">
    <original>AL</original>
    <variation>V</variation>
    <location>
        <begin position="77"/>
        <end position="78"/>
    </location>
</feature>
<feature type="sequence conflict" description="In Ref. 1; AAA26181." evidence="1" ref="1">
    <original>ARNACALPALR</original>
    <variation>RGTPAPCPPS</variation>
    <location>
        <begin position="109"/>
        <end position="119"/>
    </location>
</feature>
<feature type="sequence conflict" description="In Ref. 1; AAA26181." evidence="1" ref="1">
    <original>QL</original>
    <variation>HV</variation>
    <location>
        <begin position="207"/>
        <end position="208"/>
    </location>
</feature>
<feature type="sequence conflict" description="In Ref. 1; AAA26181." evidence="1" ref="1">
    <original>PA</original>
    <variation>R</variation>
    <location>
        <begin position="228"/>
        <end position="229"/>
    </location>
</feature>
<organism>
    <name type="scientific">Rhodobacter capsulatus (strain ATCC BAA-309 / NBRC 16581 / SB1003)</name>
    <dbReference type="NCBI Taxonomy" id="272942"/>
    <lineage>
        <taxon>Bacteria</taxon>
        <taxon>Pseudomonadati</taxon>
        <taxon>Pseudomonadota</taxon>
        <taxon>Alphaproteobacteria</taxon>
        <taxon>Rhodobacterales</taxon>
        <taxon>Rhodobacter group</taxon>
        <taxon>Rhodobacter</taxon>
    </lineage>
</organism>
<name>TRPC_RHOCB</name>
<keyword id="KW-0028">Amino-acid biosynthesis</keyword>
<keyword id="KW-0057">Aromatic amino acid biosynthesis</keyword>
<keyword id="KW-0210">Decarboxylase</keyword>
<keyword id="KW-0456">Lyase</keyword>
<keyword id="KW-1185">Reference proteome</keyword>
<keyword id="KW-0822">Tryptophan biosynthesis</keyword>
<gene>
    <name type="primary">trpC</name>
    <name type="ordered locus">RCAP_rcc02359</name>
</gene>
<protein>
    <recommendedName>
        <fullName>Indole-3-glycerol phosphate synthase</fullName>
        <shortName>IGPS</shortName>
        <ecNumber>4.1.1.48</ecNumber>
    </recommendedName>
</protein>